<dbReference type="EMBL" id="AE016877">
    <property type="protein sequence ID" value="AAP12173.1"/>
    <property type="molecule type" value="Genomic_DNA"/>
</dbReference>
<dbReference type="RefSeq" id="NP_834972.1">
    <property type="nucleotide sequence ID" value="NC_004722.1"/>
</dbReference>
<dbReference type="RefSeq" id="WP_001142624.1">
    <property type="nucleotide sequence ID" value="NZ_CP138336.1"/>
</dbReference>
<dbReference type="SMR" id="Q814V8"/>
<dbReference type="STRING" id="226900.BC_5310"/>
<dbReference type="KEGG" id="bce:BC5310"/>
<dbReference type="PATRIC" id="fig|226900.8.peg.5482"/>
<dbReference type="HOGENOM" id="CLU_079215_4_2_9"/>
<dbReference type="OrthoDB" id="282095at2"/>
<dbReference type="Proteomes" id="UP000001417">
    <property type="component" value="Chromosome"/>
</dbReference>
<dbReference type="GO" id="GO:0005886">
    <property type="term" value="C:plasma membrane"/>
    <property type="evidence" value="ECO:0007669"/>
    <property type="project" value="UniProtKB-SubCell"/>
</dbReference>
<dbReference type="GO" id="GO:0045259">
    <property type="term" value="C:proton-transporting ATP synthase complex"/>
    <property type="evidence" value="ECO:0007669"/>
    <property type="project" value="UniProtKB-KW"/>
</dbReference>
<dbReference type="GO" id="GO:0046933">
    <property type="term" value="F:proton-transporting ATP synthase activity, rotational mechanism"/>
    <property type="evidence" value="ECO:0007669"/>
    <property type="project" value="UniProtKB-UniRule"/>
</dbReference>
<dbReference type="CDD" id="cd06503">
    <property type="entry name" value="ATP-synt_Fo_b"/>
    <property type="match status" value="1"/>
</dbReference>
<dbReference type="Gene3D" id="6.10.250.1580">
    <property type="match status" value="1"/>
</dbReference>
<dbReference type="HAMAP" id="MF_01398">
    <property type="entry name" value="ATP_synth_b_bprime"/>
    <property type="match status" value="1"/>
</dbReference>
<dbReference type="InterPro" id="IPR028987">
    <property type="entry name" value="ATP_synth_B-like_membr_sf"/>
</dbReference>
<dbReference type="InterPro" id="IPR002146">
    <property type="entry name" value="ATP_synth_b/b'su_bac/chlpt"/>
</dbReference>
<dbReference type="InterPro" id="IPR005864">
    <property type="entry name" value="ATP_synth_F0_bsu_bac"/>
</dbReference>
<dbReference type="InterPro" id="IPR050059">
    <property type="entry name" value="ATP_synthase_B_chain"/>
</dbReference>
<dbReference type="NCBIfam" id="TIGR01144">
    <property type="entry name" value="ATP_synt_b"/>
    <property type="match status" value="1"/>
</dbReference>
<dbReference type="PANTHER" id="PTHR33445:SF1">
    <property type="entry name" value="ATP SYNTHASE SUBUNIT B"/>
    <property type="match status" value="1"/>
</dbReference>
<dbReference type="PANTHER" id="PTHR33445">
    <property type="entry name" value="ATP SYNTHASE SUBUNIT B', CHLOROPLASTIC"/>
    <property type="match status" value="1"/>
</dbReference>
<dbReference type="Pfam" id="PF00430">
    <property type="entry name" value="ATP-synt_B"/>
    <property type="match status" value="1"/>
</dbReference>
<dbReference type="SUPFAM" id="SSF81573">
    <property type="entry name" value="F1F0 ATP synthase subunit B, membrane domain"/>
    <property type="match status" value="1"/>
</dbReference>
<reference key="1">
    <citation type="journal article" date="2003" name="Nature">
        <title>Genome sequence of Bacillus cereus and comparative analysis with Bacillus anthracis.</title>
        <authorList>
            <person name="Ivanova N."/>
            <person name="Sorokin A."/>
            <person name="Anderson I."/>
            <person name="Galleron N."/>
            <person name="Candelon B."/>
            <person name="Kapatral V."/>
            <person name="Bhattacharyya A."/>
            <person name="Reznik G."/>
            <person name="Mikhailova N."/>
            <person name="Lapidus A."/>
            <person name="Chu L."/>
            <person name="Mazur M."/>
            <person name="Goltsman E."/>
            <person name="Larsen N."/>
            <person name="D'Souza M."/>
            <person name="Walunas T."/>
            <person name="Grechkin Y."/>
            <person name="Pusch G."/>
            <person name="Haselkorn R."/>
            <person name="Fonstein M."/>
            <person name="Ehrlich S.D."/>
            <person name="Overbeek R."/>
            <person name="Kyrpides N.C."/>
        </authorList>
    </citation>
    <scope>NUCLEOTIDE SEQUENCE [LARGE SCALE GENOMIC DNA]</scope>
    <source>
        <strain>ATCC 14579 / DSM 31 / CCUG 7414 / JCM 2152 / NBRC 15305 / NCIMB 9373 / NCTC 2599 / NRRL B-3711</strain>
    </source>
</reference>
<evidence type="ECO:0000255" key="1">
    <source>
        <dbReference type="HAMAP-Rule" id="MF_01398"/>
    </source>
</evidence>
<sequence length="168" mass="18973">MPTLLLGASIPFGTIAYTLFIFLLLLVMLRKFAWGPLMGIMKEREEHVANEIDAAERNNAEAKKLVEEQREMLKQSRVEAQELIERAKKQAVDQKDVIVAAAKEEAESIKASAVQEIQREKEQAIAALQEQVASLSVQIASKVIEKELKEEDQVKLIRDYIKEVGEAR</sequence>
<accession>Q814V8</accession>
<feature type="chain" id="PRO_0000368326" description="ATP synthase subunit b">
    <location>
        <begin position="1"/>
        <end position="168"/>
    </location>
</feature>
<feature type="transmembrane region" description="Helical" evidence="1">
    <location>
        <begin position="9"/>
        <end position="29"/>
    </location>
</feature>
<organism>
    <name type="scientific">Bacillus cereus (strain ATCC 14579 / DSM 31 / CCUG 7414 / JCM 2152 / NBRC 15305 / NCIMB 9373 / NCTC 2599 / NRRL B-3711)</name>
    <dbReference type="NCBI Taxonomy" id="226900"/>
    <lineage>
        <taxon>Bacteria</taxon>
        <taxon>Bacillati</taxon>
        <taxon>Bacillota</taxon>
        <taxon>Bacilli</taxon>
        <taxon>Bacillales</taxon>
        <taxon>Bacillaceae</taxon>
        <taxon>Bacillus</taxon>
        <taxon>Bacillus cereus group</taxon>
    </lineage>
</organism>
<gene>
    <name evidence="1" type="primary">atpF</name>
    <name type="ordered locus">BC_5310</name>
</gene>
<name>ATPF_BACCR</name>
<comment type="function">
    <text evidence="1">F(1)F(0) ATP synthase produces ATP from ADP in the presence of a proton or sodium gradient. F-type ATPases consist of two structural domains, F(1) containing the extramembraneous catalytic core and F(0) containing the membrane proton channel, linked together by a central stalk and a peripheral stalk. During catalysis, ATP synthesis in the catalytic domain of F(1) is coupled via a rotary mechanism of the central stalk subunits to proton translocation.</text>
</comment>
<comment type="function">
    <text evidence="1">Component of the F(0) channel, it forms part of the peripheral stalk, linking F(1) to F(0).</text>
</comment>
<comment type="subunit">
    <text evidence="1">F-type ATPases have 2 components, F(1) - the catalytic core - and F(0) - the membrane proton channel. F(1) has five subunits: alpha(3), beta(3), gamma(1), delta(1), epsilon(1). F(0) has three main subunits: a(1), b(2) and c(10-14). The alpha and beta chains form an alternating ring which encloses part of the gamma chain. F(1) is attached to F(0) by a central stalk formed by the gamma and epsilon chains, while a peripheral stalk is formed by the delta and b chains.</text>
</comment>
<comment type="subcellular location">
    <subcellularLocation>
        <location evidence="1">Cell membrane</location>
        <topology evidence="1">Single-pass membrane protein</topology>
    </subcellularLocation>
</comment>
<comment type="similarity">
    <text evidence="1">Belongs to the ATPase B chain family.</text>
</comment>
<keyword id="KW-0066">ATP synthesis</keyword>
<keyword id="KW-1003">Cell membrane</keyword>
<keyword id="KW-0138">CF(0)</keyword>
<keyword id="KW-0375">Hydrogen ion transport</keyword>
<keyword id="KW-0406">Ion transport</keyword>
<keyword id="KW-0472">Membrane</keyword>
<keyword id="KW-1185">Reference proteome</keyword>
<keyword id="KW-0812">Transmembrane</keyword>
<keyword id="KW-1133">Transmembrane helix</keyword>
<keyword id="KW-0813">Transport</keyword>
<proteinExistence type="inferred from homology"/>
<protein>
    <recommendedName>
        <fullName evidence="1">ATP synthase subunit b</fullName>
    </recommendedName>
    <alternativeName>
        <fullName evidence="1">ATP synthase F(0) sector subunit b</fullName>
    </alternativeName>
    <alternativeName>
        <fullName evidence="1">ATPase subunit I</fullName>
    </alternativeName>
    <alternativeName>
        <fullName evidence="1">F-type ATPase subunit b</fullName>
        <shortName evidence="1">F-ATPase subunit b</shortName>
    </alternativeName>
</protein>